<accession>B7MBY6</accession>
<dbReference type="EMBL" id="CU928161">
    <property type="protein sequence ID" value="CAR04827.1"/>
    <property type="molecule type" value="Genomic_DNA"/>
</dbReference>
<dbReference type="RefSeq" id="WP_000108476.1">
    <property type="nucleotide sequence ID" value="NC_011742.1"/>
</dbReference>
<dbReference type="SMR" id="B7MBY6"/>
<dbReference type="KEGG" id="ecz:ECS88_3601"/>
<dbReference type="HOGENOM" id="CLU_001265_46_8_6"/>
<dbReference type="Proteomes" id="UP000000747">
    <property type="component" value="Chromosome"/>
</dbReference>
<dbReference type="GO" id="GO:0005886">
    <property type="term" value="C:plasma membrane"/>
    <property type="evidence" value="ECO:0007669"/>
    <property type="project" value="UniProtKB-SubCell"/>
</dbReference>
<dbReference type="GO" id="GO:0046943">
    <property type="term" value="F:carboxylic acid transmembrane transporter activity"/>
    <property type="evidence" value="ECO:0007669"/>
    <property type="project" value="TreeGrafter"/>
</dbReference>
<dbReference type="GO" id="GO:0015538">
    <property type="term" value="F:sialic acid:proton symporter activity"/>
    <property type="evidence" value="ECO:0007669"/>
    <property type="project" value="UniProtKB-UniRule"/>
</dbReference>
<dbReference type="CDD" id="cd17316">
    <property type="entry name" value="MFS_SV2_like"/>
    <property type="match status" value="1"/>
</dbReference>
<dbReference type="FunFam" id="1.20.1250.20:FF:000027">
    <property type="entry name" value="Sialic acid transporter NanT"/>
    <property type="match status" value="1"/>
</dbReference>
<dbReference type="FunFam" id="1.20.1250.20:FF:000038">
    <property type="entry name" value="Sialic acid transporter NanT"/>
    <property type="match status" value="1"/>
</dbReference>
<dbReference type="Gene3D" id="1.20.1250.20">
    <property type="entry name" value="MFS general substrate transporter like domains"/>
    <property type="match status" value="2"/>
</dbReference>
<dbReference type="HAMAP" id="MF_01238">
    <property type="entry name" value="MFS_NanT"/>
    <property type="match status" value="1"/>
</dbReference>
<dbReference type="InterPro" id="IPR011701">
    <property type="entry name" value="MFS"/>
</dbReference>
<dbReference type="InterPro" id="IPR020846">
    <property type="entry name" value="MFS_dom"/>
</dbReference>
<dbReference type="InterPro" id="IPR036259">
    <property type="entry name" value="MFS_trans_sf"/>
</dbReference>
<dbReference type="InterPro" id="IPR004742">
    <property type="entry name" value="SA_transporter"/>
</dbReference>
<dbReference type="NCBIfam" id="TIGR00891">
    <property type="entry name" value="2A0112"/>
    <property type="match status" value="1"/>
</dbReference>
<dbReference type="NCBIfam" id="NF003024">
    <property type="entry name" value="PRK03893.1"/>
    <property type="match status" value="1"/>
</dbReference>
<dbReference type="PANTHER" id="PTHR23508">
    <property type="entry name" value="CARBOXYLIC ACID TRANSPORTER PROTEIN HOMOLOG"/>
    <property type="match status" value="1"/>
</dbReference>
<dbReference type="PANTHER" id="PTHR23508:SF3">
    <property type="entry name" value="SIALIC ACID TRANSPORTER NANT"/>
    <property type="match status" value="1"/>
</dbReference>
<dbReference type="Pfam" id="PF07690">
    <property type="entry name" value="MFS_1"/>
    <property type="match status" value="1"/>
</dbReference>
<dbReference type="SUPFAM" id="SSF103473">
    <property type="entry name" value="MFS general substrate transporter"/>
    <property type="match status" value="1"/>
</dbReference>
<dbReference type="PROSITE" id="PS50850">
    <property type="entry name" value="MFS"/>
    <property type="match status" value="1"/>
</dbReference>
<organism>
    <name type="scientific">Escherichia coli O45:K1 (strain S88 / ExPEC)</name>
    <dbReference type="NCBI Taxonomy" id="585035"/>
    <lineage>
        <taxon>Bacteria</taxon>
        <taxon>Pseudomonadati</taxon>
        <taxon>Pseudomonadota</taxon>
        <taxon>Gammaproteobacteria</taxon>
        <taxon>Enterobacterales</taxon>
        <taxon>Enterobacteriaceae</taxon>
        <taxon>Escherichia</taxon>
    </lineage>
</organism>
<proteinExistence type="inferred from homology"/>
<sequence>MSTTTQNIPWYRHLNRAQWRAFSAAWLGYLLDGFDFVLIALVLTEVQGEFGLTTVQAASLISAAFISRWFGGLMLGAMGDRYGRRLAMVTSIVLFSAGTLACGFAPGYITMFIARLVIGMGMAGEYGSSATYVIESWPKHLRNKASGFLISGFSVGAVVAAQVYSLVVPVWGWRALFFIGILPIIFALWLRKNIPEAEDWKEKHGGKAPVRTMVDILYRGEHRIANIVMTLAAATALWFCFAGNLQNAAIVAVLGLLCAAIFISFMVQSTGKRWPTGVMLMVVVLFAFLYSWPIQALLPTYLKTDLAYDPHTVANVLFFSGFGAAVGCCVGGFLGDWLGTRKAYVCSLLASQLLIIPVFAIGGANVWVLGLLLFFQQMLGQGIAGILPKLIGGYFDTDQRAAGLGFTYNVGALGGALAPILGALIAQRLDLGTALASLSFSLTFVVILLIGLDMPSRVQRWLRPEALRTHDAIDGKPFSGAVPFGSAKNDLVKTKS</sequence>
<keyword id="KW-0997">Cell inner membrane</keyword>
<keyword id="KW-1003">Cell membrane</keyword>
<keyword id="KW-0472">Membrane</keyword>
<keyword id="KW-1185">Reference proteome</keyword>
<keyword id="KW-0762">Sugar transport</keyword>
<keyword id="KW-0812">Transmembrane</keyword>
<keyword id="KW-1133">Transmembrane helix</keyword>
<keyword id="KW-0813">Transport</keyword>
<comment type="function">
    <text evidence="1">Catalyzes the proton-dependent transport of sialic acid.</text>
</comment>
<comment type="catalytic activity">
    <reaction evidence="1">
        <text>N-acetylneuraminate(in) + H(+)(in) = N-acetylneuraminate(out) + H(+)(out)</text>
        <dbReference type="Rhea" id="RHEA:28987"/>
        <dbReference type="ChEBI" id="CHEBI:15378"/>
        <dbReference type="ChEBI" id="CHEBI:35418"/>
    </reaction>
</comment>
<comment type="subcellular location">
    <subcellularLocation>
        <location evidence="1">Cell inner membrane</location>
        <topology evidence="1">Multi-pass membrane protein</topology>
    </subcellularLocation>
</comment>
<comment type="similarity">
    <text evidence="1">Belongs to the major facilitator superfamily. Sialate:H(+) symporter (SHS) (TC 2.A.1.12) family.</text>
</comment>
<reference key="1">
    <citation type="journal article" date="2009" name="PLoS Genet.">
        <title>Organised genome dynamics in the Escherichia coli species results in highly diverse adaptive paths.</title>
        <authorList>
            <person name="Touchon M."/>
            <person name="Hoede C."/>
            <person name="Tenaillon O."/>
            <person name="Barbe V."/>
            <person name="Baeriswyl S."/>
            <person name="Bidet P."/>
            <person name="Bingen E."/>
            <person name="Bonacorsi S."/>
            <person name="Bouchier C."/>
            <person name="Bouvet O."/>
            <person name="Calteau A."/>
            <person name="Chiapello H."/>
            <person name="Clermont O."/>
            <person name="Cruveiller S."/>
            <person name="Danchin A."/>
            <person name="Diard M."/>
            <person name="Dossat C."/>
            <person name="Karoui M.E."/>
            <person name="Frapy E."/>
            <person name="Garry L."/>
            <person name="Ghigo J.M."/>
            <person name="Gilles A.M."/>
            <person name="Johnson J."/>
            <person name="Le Bouguenec C."/>
            <person name="Lescat M."/>
            <person name="Mangenot S."/>
            <person name="Martinez-Jehanne V."/>
            <person name="Matic I."/>
            <person name="Nassif X."/>
            <person name="Oztas S."/>
            <person name="Petit M.A."/>
            <person name="Pichon C."/>
            <person name="Rouy Z."/>
            <person name="Ruf C.S."/>
            <person name="Schneider D."/>
            <person name="Tourret J."/>
            <person name="Vacherie B."/>
            <person name="Vallenet D."/>
            <person name="Medigue C."/>
            <person name="Rocha E.P.C."/>
            <person name="Denamur E."/>
        </authorList>
    </citation>
    <scope>NUCLEOTIDE SEQUENCE [LARGE SCALE GENOMIC DNA]</scope>
    <source>
        <strain>S88 / ExPEC</strain>
    </source>
</reference>
<protein>
    <recommendedName>
        <fullName evidence="1">Sialic acid transporter NanT</fullName>
    </recommendedName>
    <alternativeName>
        <fullName evidence="1">Sialic acid permease</fullName>
    </alternativeName>
    <alternativeName>
        <fullName evidence="1">Sialic acid/H(+) symporter</fullName>
    </alternativeName>
</protein>
<gene>
    <name evidence="1" type="primary">nanT</name>
    <name type="ordered locus">ECS88_3601</name>
</gene>
<feature type="chain" id="PRO_1000214041" description="Sialic acid transporter NanT">
    <location>
        <begin position="1"/>
        <end position="496"/>
    </location>
</feature>
<feature type="transmembrane region" description="Helical" evidence="1">
    <location>
        <begin position="22"/>
        <end position="42"/>
    </location>
</feature>
<feature type="transmembrane region" description="Helical" evidence="1">
    <location>
        <begin position="58"/>
        <end position="78"/>
    </location>
</feature>
<feature type="transmembrane region" description="Helical" evidence="1">
    <location>
        <begin position="92"/>
        <end position="112"/>
    </location>
</feature>
<feature type="transmembrane region" description="Helical" evidence="1">
    <location>
        <begin position="116"/>
        <end position="136"/>
    </location>
</feature>
<feature type="transmembrane region" description="Helical" evidence="1">
    <location>
        <begin position="148"/>
        <end position="168"/>
    </location>
</feature>
<feature type="transmembrane region" description="Helical" evidence="1">
    <location>
        <begin position="170"/>
        <end position="190"/>
    </location>
</feature>
<feature type="transmembrane region" description="Helical" evidence="1">
    <location>
        <begin position="224"/>
        <end position="244"/>
    </location>
</feature>
<feature type="transmembrane region" description="Helical" evidence="1">
    <location>
        <begin position="247"/>
        <end position="267"/>
    </location>
</feature>
<feature type="transmembrane region" description="Helical" evidence="1">
    <location>
        <begin position="278"/>
        <end position="298"/>
    </location>
</feature>
<feature type="transmembrane region" description="Helical" evidence="1">
    <location>
        <begin position="313"/>
        <end position="333"/>
    </location>
</feature>
<feature type="transmembrane region" description="Helical" evidence="1">
    <location>
        <begin position="353"/>
        <end position="375"/>
    </location>
</feature>
<feature type="transmembrane region" description="Helical" evidence="1">
    <location>
        <begin position="406"/>
        <end position="426"/>
    </location>
</feature>
<feature type="transmembrane region" description="Helical" evidence="1">
    <location>
        <begin position="431"/>
        <end position="451"/>
    </location>
</feature>
<name>NANT_ECO45</name>
<evidence type="ECO:0000255" key="1">
    <source>
        <dbReference type="HAMAP-Rule" id="MF_01238"/>
    </source>
</evidence>